<name>INT1_DICDI</name>
<keyword id="KW-0175">Coiled coil</keyword>
<keyword id="KW-0539">Nucleus</keyword>
<keyword id="KW-1185">Reference proteome</keyword>
<organism>
    <name type="scientific">Dictyostelium discoideum</name>
    <name type="common">Social amoeba</name>
    <dbReference type="NCBI Taxonomy" id="44689"/>
    <lineage>
        <taxon>Eukaryota</taxon>
        <taxon>Amoebozoa</taxon>
        <taxon>Evosea</taxon>
        <taxon>Eumycetozoa</taxon>
        <taxon>Dictyostelia</taxon>
        <taxon>Dictyosteliales</taxon>
        <taxon>Dictyosteliaceae</taxon>
        <taxon>Dictyostelium</taxon>
    </lineage>
</organism>
<proteinExistence type="inferred from homology"/>
<accession>Q54NC8</accession>
<protein>
    <recommendedName>
        <fullName>Integrator complex subunit 1 homolog</fullName>
    </recommendedName>
</protein>
<gene>
    <name type="primary">ints1</name>
    <name type="ORF">DDB_G0285393</name>
</gene>
<sequence>MMLNKIKRSKAGSIEDSKLQALPLGTRRKIGQTTGESDNNNNNSNDQSLKKFKNDNTEENNSIGVNNNTSTNININTNTNINTNNSTNTNNINNTNNNNNNNNNNNNNNNNNNNNNNNNSNNNNNNNISNGGNNINNNNNNNNNGNNNNNINNSNGIRRVFDQNYYIDLVESEEDIEIKIRIIKSMLMVLKSSVGNEPDKCAFISLLVICKRSPTLFSHFDLLEPLLSLLKKDPTHVQKKNNLLSILACNLLMAGYDHIQDWPVYLFCAYLDDAIGDRYWVEDQYCKTFVNNIITAFPQQPQPPQQQQTKQPVNIKTQPQQQQQQQQQPQPQQIKKSDDDIVEEIDNLLSVSSSSQPQPQQQKNRFSHCLNDIIKYIIHMIRQYIQSPNQRVFIKLLSLTVGFKESRLEGSQIIEQLLGNTNVFRFAKEYLTQLLAATTESTVEDIKTVQNLLKIQVSHHIDIISTLLVNNPIYPAIALHQAIEIELDTNQKVATKSKLSIIFKFLPNNRGEEELAMILKDFCSRDDSIRSPVKIIVKKILKNLTFISLFYLCEQLSTITQKDEQFYLLLQSSQQQQQQQPPPSTITITRERWALNIIHMLTQILFLIPSMNEHLKDQSNMRSMISTIQSSSVSWCFKLLNLGVLSYGDALSLIGKVLIFEPLNSFFQAPNLAVDSDRNAYRMLTTEIPIQENILDILLTIGFEYPSEKKIVLELCEALLKRAISIVHKFNVLVPLTKVTFAESILSLSRIENTSEPQLAYTSLFWQSTILACLLICLSPSIIGSYYWNNCPTIRILIEMIITRSWKFPPYLPKAVANNPSYFQLIEQNQRIEEKKLLSRIPQLTSIDFMILDSIKGTNGVIRQPPEEIIEKLQKLDNDFHLGFILCNCRSPDFLLDIMSNQDSKQSMMWLNPIIHNDPKTLDILPPICLSEILLSTQFEQQQQQQQQQQQLQTPQQQQQQQQPTNPIAPRVLNRMSLFFNSPSPVPTLEILNFFFTLLCSDNPIIRILSKKSLSLLVLPIKSTLSTTTTTTSSTTTTTTTTTSTTTSTSTSSSSSSLNPTQPSLRSSCDKIKTSGLSGSSNGINQSSDSITAVAGSTSPTTTTTSSSSTCQTYITEEFQWLLKLNNLAWFEESQEIVISALKKAINVETDVSSIRSYIQYLVVNQSTPFDASFQMDLSQLILNRGIIANYLLSSDISILIFNAYLNILEPLNQKDLSKKLLLLSSSTNSINNINNNDNNNNNNNNNNNNNNNNNNNNNDNNINKNNDDNNHSNSMANNNLPNNNNKNNQKSKKWVKIIKNSNNKNNDDNSMEDDNNEDIIYLPRIVLDSIIYCISSSLNVNDIDQIQSIVAILFPTTTTTAIDQDKTFEIKNKFLDFDNQTDEEPILKSKQLVEVSLKSSIPQLISIALQRNTSVGLFNGLNDYIEQLILKGIEMSFLSRSMILEIIDKNIDKIKSSFENNSSNNDNNESKEIKEILNQIIENNEKQTILKLFIKESSKHGQLFLNFIESLISAKSGDSKQITKKKQKSSFNLFNEFLETDEINNQEIEEGSMELDINFENSIKHQILNINNNNNNNNNNNNNNNNNNNNNNNNNNNNNNNITQLLEGNGQIDSFVKAINSFEVSKSISSDININIPFSISTIRILKNTTQQKQQKQQQKESVQKSIQSLSKLILSSKNIKNYQKRFIDHILKKKSNLELIESAQNLTLENGINKEFDICKEWEIYSSGSGSSSNEINDQFKGTEIIRKLVNKQHFSIIIVSDPLKLGEIFKSLVKQFILNDQLRLEEFIGGFFTKVYSNSLSQSSTITIVLFNSLVSLLTDFGSNIQMKQSLGILLDWTGLLVQQFLLKNNNNNNNNNNNGISLNIKQFYFLLFGKGSFKFSTLLHSHFIHNSTWRNLKIMMQWLFKVNNNYNDDDDDNDDGDRPIIDATLVLNFINAYHQHPRSGAPYYSASNTATTASSKSITNMSTIMDSMVMHYLNPSTIRTLSDYIIEEIDQVKGGPSNYPQSKLRNRMNLLISSSMISKENLISLVLHLSNQYTKSTSSSIVIKQIYFAFPSTLKSILTNFSPCLIVSSPNNLLSQQQQQQQQQQQQQQKQQSNNSNNINNNNNNNNSEKKQKSKEQNIILTTNDLIVNNQSIPSTQLDIILHRVILKISDMSTIENRNSGFIIVRKLAILHPELITLHLPSFYSLLSGRADTPLTLFLSRNYHHLFYQILDLLDILRPIVFNSQSLLPILQEYFTLFSNNCNQRINDFIPIVSKLCDFLLPFTGNYQNLDILIQNKDTIKSLSIFYPNAEPLLLRIKPNQISSLSSSYYLSSLLSINNNNNNNNNNNNNNNNNNNNNNNNNNNPLELIKFKLYDNGYNNNNNDKLVKQLEDVIKITQNLPSYLHCIKDELLRLIQSDYQNIRAISYFLIQRYLQYCPQDAESMMDKYLSCFQHWNPDVVKDAIQHSSDFYCLSNDRSEYLIEQILIYGGKDSINDIKKLINPFSRIFY</sequence>
<evidence type="ECO:0000250" key="1">
    <source>
        <dbReference type="UniProtKB" id="Q8N201"/>
    </source>
</evidence>
<evidence type="ECO:0000255" key="2"/>
<evidence type="ECO:0000256" key="3">
    <source>
        <dbReference type="SAM" id="MobiDB-lite"/>
    </source>
</evidence>
<evidence type="ECO:0000305" key="4"/>
<comment type="function">
    <text evidence="1">Component of the integrator complex, a multiprotein complex that terminates RNA polymerase II (Pol II) transcription in the promoter-proximal region of genes. The integrator complex provides a quality checkpoint during transcription elongation by driving premature transcription termination of transcripts that are unfavorably configured for transcriptional elongation: the complex terminates transcription by (1) catalyzing dephosphorylation of the C-terminal domain (CTD) of Pol II subunit polr2a, (2) degrading the exiting nascent RNA transcript via endonuclease activity and (3) promoting the release of Pol II from bound DNA. The integrator complex is also involved in terminating the synthesis of non-coding Pol II transcripts, such as enhancer RNAs (eRNAs), small nuclear RNAs (snRNAs), telomerase RNAs and long non-coding RNAs (lncRNAs).</text>
</comment>
<comment type="subunit">
    <text evidence="1">Component of the Integrator complex. The core complex associates with protein phosphatase 2A subunits to form the Integrator-PP2A (INTAC) complex.</text>
</comment>
<comment type="subcellular location">
    <subcellularLocation>
        <location evidence="1">Nucleus</location>
    </subcellularLocation>
</comment>
<comment type="similarity">
    <text evidence="4">Belongs to the Integrator subunit 1 family.</text>
</comment>
<dbReference type="EMBL" id="AAFI02000079">
    <property type="protein sequence ID" value="EAL64771.1"/>
    <property type="molecule type" value="Genomic_DNA"/>
</dbReference>
<dbReference type="RefSeq" id="XP_638252.1">
    <property type="nucleotide sequence ID" value="XM_633160.1"/>
</dbReference>
<dbReference type="FunCoup" id="Q54NC8">
    <property type="interactions" value="194"/>
</dbReference>
<dbReference type="STRING" id="44689.Q54NC8"/>
<dbReference type="PaxDb" id="44689-DDB0234073"/>
<dbReference type="EnsemblProtists" id="EAL64771">
    <property type="protein sequence ID" value="EAL64771"/>
    <property type="gene ID" value="DDB_G0285393"/>
</dbReference>
<dbReference type="GeneID" id="8625060"/>
<dbReference type="KEGG" id="ddi:DDB_G0285393"/>
<dbReference type="dictyBase" id="DDB_G0285393">
    <property type="gene designation" value="ints1"/>
</dbReference>
<dbReference type="VEuPathDB" id="AmoebaDB:DDB_G0285393"/>
<dbReference type="eggNOG" id="KOG4596">
    <property type="taxonomic scope" value="Eukaryota"/>
</dbReference>
<dbReference type="HOGENOM" id="CLU_228556_0_0_1"/>
<dbReference type="InParanoid" id="Q54NC8"/>
<dbReference type="OMA" id="FIHNSTW"/>
<dbReference type="Reactome" id="R-DDI-6807505">
    <property type="pathway name" value="RNA polymerase II transcribes snRNA genes"/>
</dbReference>
<dbReference type="PRO" id="PR:Q54NC8"/>
<dbReference type="Proteomes" id="UP000002195">
    <property type="component" value="Chromosome 4"/>
</dbReference>
<dbReference type="GO" id="GO:0160232">
    <property type="term" value="C:INTAC complex"/>
    <property type="evidence" value="ECO:0000250"/>
    <property type="project" value="UniProtKB"/>
</dbReference>
<dbReference type="GO" id="GO:0032039">
    <property type="term" value="C:integrator complex"/>
    <property type="evidence" value="ECO:0000250"/>
    <property type="project" value="UniProtKB"/>
</dbReference>
<dbReference type="GO" id="GO:0005634">
    <property type="term" value="C:nucleus"/>
    <property type="evidence" value="ECO:0000250"/>
    <property type="project" value="UniProtKB"/>
</dbReference>
<dbReference type="GO" id="GO:0160240">
    <property type="term" value="P:RNA polymerase II transcription initiation surveillance"/>
    <property type="evidence" value="ECO:0000250"/>
    <property type="project" value="UniProtKB"/>
</dbReference>
<dbReference type="GO" id="GO:0034474">
    <property type="term" value="P:U2 snRNA 3'-end processing"/>
    <property type="evidence" value="ECO:0000318"/>
    <property type="project" value="GO_Central"/>
</dbReference>
<dbReference type="InterPro" id="IPR053964">
    <property type="entry name" value="INT1_R3"/>
</dbReference>
<dbReference type="InterPro" id="IPR038902">
    <property type="entry name" value="INTS1"/>
</dbReference>
<dbReference type="InterPro" id="IPR053966">
    <property type="entry name" value="INTS1_INTS2-bd"/>
</dbReference>
<dbReference type="InterPro" id="IPR053965">
    <property type="entry name" value="INTS1_R4"/>
</dbReference>
<dbReference type="PANTHER" id="PTHR21224">
    <property type="entry name" value="INTEGRATOR COMPLEX SUBUNIT 1"/>
    <property type="match status" value="1"/>
</dbReference>
<dbReference type="PANTHER" id="PTHR21224:SF1">
    <property type="entry name" value="INTEGRATOR COMPLEX SUBUNIT 1"/>
    <property type="match status" value="1"/>
</dbReference>
<dbReference type="Pfam" id="PF22927">
    <property type="entry name" value="INT1_R3"/>
    <property type="match status" value="1"/>
</dbReference>
<dbReference type="Pfam" id="PF22929">
    <property type="entry name" value="INTS1_INTS2-bd"/>
    <property type="match status" value="1"/>
</dbReference>
<dbReference type="Pfam" id="PF22928">
    <property type="entry name" value="INTS1_R4"/>
    <property type="match status" value="1"/>
</dbReference>
<reference key="1">
    <citation type="journal article" date="2005" name="Nature">
        <title>The genome of the social amoeba Dictyostelium discoideum.</title>
        <authorList>
            <person name="Eichinger L."/>
            <person name="Pachebat J.A."/>
            <person name="Gloeckner G."/>
            <person name="Rajandream M.A."/>
            <person name="Sucgang R."/>
            <person name="Berriman M."/>
            <person name="Song J."/>
            <person name="Olsen R."/>
            <person name="Szafranski K."/>
            <person name="Xu Q."/>
            <person name="Tunggal B."/>
            <person name="Kummerfeld S."/>
            <person name="Madera M."/>
            <person name="Konfortov B.A."/>
            <person name="Rivero F."/>
            <person name="Bankier A.T."/>
            <person name="Lehmann R."/>
            <person name="Hamlin N."/>
            <person name="Davies R."/>
            <person name="Gaudet P."/>
            <person name="Fey P."/>
            <person name="Pilcher K."/>
            <person name="Chen G."/>
            <person name="Saunders D."/>
            <person name="Sodergren E.J."/>
            <person name="Davis P."/>
            <person name="Kerhornou A."/>
            <person name="Nie X."/>
            <person name="Hall N."/>
            <person name="Anjard C."/>
            <person name="Hemphill L."/>
            <person name="Bason N."/>
            <person name="Farbrother P."/>
            <person name="Desany B."/>
            <person name="Just E."/>
            <person name="Morio T."/>
            <person name="Rost R."/>
            <person name="Churcher C.M."/>
            <person name="Cooper J."/>
            <person name="Haydock S."/>
            <person name="van Driessche N."/>
            <person name="Cronin A."/>
            <person name="Goodhead I."/>
            <person name="Muzny D.M."/>
            <person name="Mourier T."/>
            <person name="Pain A."/>
            <person name="Lu M."/>
            <person name="Harper D."/>
            <person name="Lindsay R."/>
            <person name="Hauser H."/>
            <person name="James K.D."/>
            <person name="Quiles M."/>
            <person name="Madan Babu M."/>
            <person name="Saito T."/>
            <person name="Buchrieser C."/>
            <person name="Wardroper A."/>
            <person name="Felder M."/>
            <person name="Thangavelu M."/>
            <person name="Johnson D."/>
            <person name="Knights A."/>
            <person name="Loulseged H."/>
            <person name="Mungall K.L."/>
            <person name="Oliver K."/>
            <person name="Price C."/>
            <person name="Quail M.A."/>
            <person name="Urushihara H."/>
            <person name="Hernandez J."/>
            <person name="Rabbinowitsch E."/>
            <person name="Steffen D."/>
            <person name="Sanders M."/>
            <person name="Ma J."/>
            <person name="Kohara Y."/>
            <person name="Sharp S."/>
            <person name="Simmonds M.N."/>
            <person name="Spiegler S."/>
            <person name="Tivey A."/>
            <person name="Sugano S."/>
            <person name="White B."/>
            <person name="Walker D."/>
            <person name="Woodward J.R."/>
            <person name="Winckler T."/>
            <person name="Tanaka Y."/>
            <person name="Shaulsky G."/>
            <person name="Schleicher M."/>
            <person name="Weinstock G.M."/>
            <person name="Rosenthal A."/>
            <person name="Cox E.C."/>
            <person name="Chisholm R.L."/>
            <person name="Gibbs R.A."/>
            <person name="Loomis W.F."/>
            <person name="Platzer M."/>
            <person name="Kay R.R."/>
            <person name="Williams J.G."/>
            <person name="Dear P.H."/>
            <person name="Noegel A.A."/>
            <person name="Barrell B.G."/>
            <person name="Kuspa A."/>
        </authorList>
    </citation>
    <scope>NUCLEOTIDE SEQUENCE [LARGE SCALE GENOMIC DNA]</scope>
    <source>
        <strain>AX4</strain>
    </source>
</reference>
<feature type="chain" id="PRO_0000344373" description="Integrator complex subunit 1 homolog">
    <location>
        <begin position="1"/>
        <end position="2497"/>
    </location>
</feature>
<feature type="region of interest" description="Disordered" evidence="3">
    <location>
        <begin position="1"/>
        <end position="151"/>
    </location>
</feature>
<feature type="region of interest" description="Disordered" evidence="3">
    <location>
        <begin position="300"/>
        <end position="337"/>
    </location>
</feature>
<feature type="region of interest" description="Disordered" evidence="3">
    <location>
        <begin position="946"/>
        <end position="965"/>
    </location>
</feature>
<feature type="region of interest" description="Disordered" evidence="3">
    <location>
        <begin position="1028"/>
        <end position="1108"/>
    </location>
</feature>
<feature type="region of interest" description="Disordered" evidence="3">
    <location>
        <begin position="1234"/>
        <end position="1292"/>
    </location>
</feature>
<feature type="region of interest" description="Disordered" evidence="3">
    <location>
        <begin position="1572"/>
        <end position="1604"/>
    </location>
</feature>
<feature type="region of interest" description="Disordered" evidence="3">
    <location>
        <begin position="2084"/>
        <end position="2123"/>
    </location>
</feature>
<feature type="region of interest" description="Disordered" evidence="3">
    <location>
        <begin position="2329"/>
        <end position="2350"/>
    </location>
</feature>
<feature type="coiled-coil region" evidence="2">
    <location>
        <begin position="1645"/>
        <end position="1675"/>
    </location>
</feature>
<feature type="compositionally biased region" description="Basic residues" evidence="3">
    <location>
        <begin position="1"/>
        <end position="10"/>
    </location>
</feature>
<feature type="compositionally biased region" description="Low complexity" evidence="3">
    <location>
        <begin position="37"/>
        <end position="46"/>
    </location>
</feature>
<feature type="compositionally biased region" description="Low complexity" evidence="3">
    <location>
        <begin position="60"/>
        <end position="151"/>
    </location>
</feature>
<feature type="compositionally biased region" description="Low complexity" evidence="3">
    <location>
        <begin position="305"/>
        <end position="333"/>
    </location>
</feature>
<feature type="compositionally biased region" description="Low complexity" evidence="3">
    <location>
        <begin position="946"/>
        <end position="963"/>
    </location>
</feature>
<feature type="compositionally biased region" description="Low complexity" evidence="3">
    <location>
        <begin position="1028"/>
        <end position="1058"/>
    </location>
</feature>
<feature type="compositionally biased region" description="Polar residues" evidence="3">
    <location>
        <begin position="1075"/>
        <end position="1091"/>
    </location>
</feature>
<feature type="compositionally biased region" description="Low complexity" evidence="3">
    <location>
        <begin position="1097"/>
        <end position="1108"/>
    </location>
</feature>
<feature type="compositionally biased region" description="Low complexity" evidence="3">
    <location>
        <begin position="1234"/>
        <end position="1265"/>
    </location>
</feature>
<feature type="compositionally biased region" description="Low complexity" evidence="3">
    <location>
        <begin position="1272"/>
        <end position="1289"/>
    </location>
</feature>
<feature type="compositionally biased region" description="Low complexity" evidence="3">
    <location>
        <begin position="1572"/>
        <end position="1602"/>
    </location>
</feature>
<feature type="compositionally biased region" description="Low complexity" evidence="3">
    <location>
        <begin position="2084"/>
        <end position="2115"/>
    </location>
</feature>